<dbReference type="EMBL" id="CP001087">
    <property type="protein sequence ID" value="ACN15489.1"/>
    <property type="molecule type" value="Genomic_DNA"/>
</dbReference>
<dbReference type="RefSeq" id="WP_015904254.1">
    <property type="nucleotide sequence ID" value="NC_012108.1"/>
</dbReference>
<dbReference type="SMR" id="C0QFS1"/>
<dbReference type="STRING" id="177437.HRM2_23940"/>
<dbReference type="KEGG" id="dat:HRM2_23940"/>
<dbReference type="eggNOG" id="COG0249">
    <property type="taxonomic scope" value="Bacteria"/>
</dbReference>
<dbReference type="HOGENOM" id="CLU_002472_3_0_7"/>
<dbReference type="OrthoDB" id="9802448at2"/>
<dbReference type="Proteomes" id="UP000000442">
    <property type="component" value="Chromosome"/>
</dbReference>
<dbReference type="GO" id="GO:0005829">
    <property type="term" value="C:cytosol"/>
    <property type="evidence" value="ECO:0007669"/>
    <property type="project" value="TreeGrafter"/>
</dbReference>
<dbReference type="GO" id="GO:0005524">
    <property type="term" value="F:ATP binding"/>
    <property type="evidence" value="ECO:0007669"/>
    <property type="project" value="UniProtKB-UniRule"/>
</dbReference>
<dbReference type="GO" id="GO:0140664">
    <property type="term" value="F:ATP-dependent DNA damage sensor activity"/>
    <property type="evidence" value="ECO:0007669"/>
    <property type="project" value="InterPro"/>
</dbReference>
<dbReference type="GO" id="GO:0003684">
    <property type="term" value="F:damaged DNA binding"/>
    <property type="evidence" value="ECO:0007669"/>
    <property type="project" value="UniProtKB-UniRule"/>
</dbReference>
<dbReference type="GO" id="GO:0030983">
    <property type="term" value="F:mismatched DNA binding"/>
    <property type="evidence" value="ECO:0007669"/>
    <property type="project" value="InterPro"/>
</dbReference>
<dbReference type="GO" id="GO:0006298">
    <property type="term" value="P:mismatch repair"/>
    <property type="evidence" value="ECO:0007669"/>
    <property type="project" value="UniProtKB-UniRule"/>
</dbReference>
<dbReference type="CDD" id="cd03284">
    <property type="entry name" value="ABC_MutS1"/>
    <property type="match status" value="1"/>
</dbReference>
<dbReference type="FunFam" id="3.40.1170.10:FF:000001">
    <property type="entry name" value="DNA mismatch repair protein MutS"/>
    <property type="match status" value="1"/>
</dbReference>
<dbReference type="FunFam" id="3.40.50.300:FF:000870">
    <property type="entry name" value="MutS protein homolog 4"/>
    <property type="match status" value="1"/>
</dbReference>
<dbReference type="Gene3D" id="1.10.1420.10">
    <property type="match status" value="2"/>
</dbReference>
<dbReference type="Gene3D" id="3.40.1170.10">
    <property type="entry name" value="DNA repair protein MutS, domain I"/>
    <property type="match status" value="1"/>
</dbReference>
<dbReference type="Gene3D" id="3.30.420.110">
    <property type="entry name" value="MutS, connector domain"/>
    <property type="match status" value="1"/>
</dbReference>
<dbReference type="Gene3D" id="3.40.50.300">
    <property type="entry name" value="P-loop containing nucleotide triphosphate hydrolases"/>
    <property type="match status" value="1"/>
</dbReference>
<dbReference type="HAMAP" id="MF_00096">
    <property type="entry name" value="MutS"/>
    <property type="match status" value="1"/>
</dbReference>
<dbReference type="InterPro" id="IPR005748">
    <property type="entry name" value="DNA_mismatch_repair_MutS"/>
</dbReference>
<dbReference type="InterPro" id="IPR007695">
    <property type="entry name" value="DNA_mismatch_repair_MutS-lik_N"/>
</dbReference>
<dbReference type="InterPro" id="IPR017261">
    <property type="entry name" value="DNA_mismatch_repair_MutS/MSH"/>
</dbReference>
<dbReference type="InterPro" id="IPR000432">
    <property type="entry name" value="DNA_mismatch_repair_MutS_C"/>
</dbReference>
<dbReference type="InterPro" id="IPR007861">
    <property type="entry name" value="DNA_mismatch_repair_MutS_clamp"/>
</dbReference>
<dbReference type="InterPro" id="IPR007696">
    <property type="entry name" value="DNA_mismatch_repair_MutS_core"/>
</dbReference>
<dbReference type="InterPro" id="IPR016151">
    <property type="entry name" value="DNA_mismatch_repair_MutS_N"/>
</dbReference>
<dbReference type="InterPro" id="IPR036187">
    <property type="entry name" value="DNA_mismatch_repair_MutS_sf"/>
</dbReference>
<dbReference type="InterPro" id="IPR007860">
    <property type="entry name" value="DNA_mmatch_repair_MutS_con_dom"/>
</dbReference>
<dbReference type="InterPro" id="IPR045076">
    <property type="entry name" value="MutS"/>
</dbReference>
<dbReference type="InterPro" id="IPR036678">
    <property type="entry name" value="MutS_con_dom_sf"/>
</dbReference>
<dbReference type="InterPro" id="IPR027417">
    <property type="entry name" value="P-loop_NTPase"/>
</dbReference>
<dbReference type="NCBIfam" id="TIGR01070">
    <property type="entry name" value="mutS1"/>
    <property type="match status" value="1"/>
</dbReference>
<dbReference type="NCBIfam" id="NF003810">
    <property type="entry name" value="PRK05399.1"/>
    <property type="match status" value="1"/>
</dbReference>
<dbReference type="PANTHER" id="PTHR11361:SF34">
    <property type="entry name" value="DNA MISMATCH REPAIR PROTEIN MSH1, MITOCHONDRIAL"/>
    <property type="match status" value="1"/>
</dbReference>
<dbReference type="PANTHER" id="PTHR11361">
    <property type="entry name" value="DNA MISMATCH REPAIR PROTEIN MUTS FAMILY MEMBER"/>
    <property type="match status" value="1"/>
</dbReference>
<dbReference type="Pfam" id="PF01624">
    <property type="entry name" value="MutS_I"/>
    <property type="match status" value="1"/>
</dbReference>
<dbReference type="Pfam" id="PF05188">
    <property type="entry name" value="MutS_II"/>
    <property type="match status" value="1"/>
</dbReference>
<dbReference type="Pfam" id="PF05192">
    <property type="entry name" value="MutS_III"/>
    <property type="match status" value="1"/>
</dbReference>
<dbReference type="Pfam" id="PF05190">
    <property type="entry name" value="MutS_IV"/>
    <property type="match status" value="1"/>
</dbReference>
<dbReference type="Pfam" id="PF00488">
    <property type="entry name" value="MutS_V"/>
    <property type="match status" value="1"/>
</dbReference>
<dbReference type="PIRSF" id="PIRSF037677">
    <property type="entry name" value="DNA_mis_repair_Msh6"/>
    <property type="match status" value="1"/>
</dbReference>
<dbReference type="SMART" id="SM00534">
    <property type="entry name" value="MUTSac"/>
    <property type="match status" value="1"/>
</dbReference>
<dbReference type="SMART" id="SM00533">
    <property type="entry name" value="MUTSd"/>
    <property type="match status" value="1"/>
</dbReference>
<dbReference type="SUPFAM" id="SSF55271">
    <property type="entry name" value="DNA repair protein MutS, domain I"/>
    <property type="match status" value="1"/>
</dbReference>
<dbReference type="SUPFAM" id="SSF53150">
    <property type="entry name" value="DNA repair protein MutS, domain II"/>
    <property type="match status" value="1"/>
</dbReference>
<dbReference type="SUPFAM" id="SSF48334">
    <property type="entry name" value="DNA repair protein MutS, domain III"/>
    <property type="match status" value="1"/>
</dbReference>
<dbReference type="SUPFAM" id="SSF52540">
    <property type="entry name" value="P-loop containing nucleoside triphosphate hydrolases"/>
    <property type="match status" value="1"/>
</dbReference>
<dbReference type="PROSITE" id="PS00486">
    <property type="entry name" value="DNA_MISMATCH_REPAIR_2"/>
    <property type="match status" value="1"/>
</dbReference>
<evidence type="ECO:0000255" key="1">
    <source>
        <dbReference type="HAMAP-Rule" id="MF_00096"/>
    </source>
</evidence>
<evidence type="ECO:0000256" key="2">
    <source>
        <dbReference type="SAM" id="MobiDB-lite"/>
    </source>
</evidence>
<reference key="1">
    <citation type="journal article" date="2009" name="Environ. Microbiol.">
        <title>Genome sequence of Desulfobacterium autotrophicum HRM2, a marine sulfate reducer oxidizing organic carbon completely to carbon dioxide.</title>
        <authorList>
            <person name="Strittmatter A.W."/>
            <person name="Liesegang H."/>
            <person name="Rabus R."/>
            <person name="Decker I."/>
            <person name="Amann J."/>
            <person name="Andres S."/>
            <person name="Henne A."/>
            <person name="Fricke W.F."/>
            <person name="Martinez-Arias R."/>
            <person name="Bartels D."/>
            <person name="Goesmann A."/>
            <person name="Krause L."/>
            <person name="Puehler A."/>
            <person name="Klenk H.P."/>
            <person name="Richter M."/>
            <person name="Schuler M."/>
            <person name="Gloeckner F.O."/>
            <person name="Meyerdierks A."/>
            <person name="Gottschalk G."/>
            <person name="Amann R."/>
        </authorList>
    </citation>
    <scope>NUCLEOTIDE SEQUENCE [LARGE SCALE GENOMIC DNA]</scope>
    <source>
        <strain>ATCC 43914 / DSM 3382 / VKM B-1955 / HRM2</strain>
    </source>
</reference>
<gene>
    <name evidence="1" type="primary">mutS</name>
    <name type="ordered locus">HRM2_23940</name>
</gene>
<feature type="chain" id="PRO_1000202733" description="DNA mismatch repair protein MutS">
    <location>
        <begin position="1"/>
        <end position="895"/>
    </location>
</feature>
<feature type="region of interest" description="Disordered" evidence="2">
    <location>
        <begin position="824"/>
        <end position="849"/>
    </location>
</feature>
<feature type="compositionally biased region" description="Polar residues" evidence="2">
    <location>
        <begin position="837"/>
        <end position="849"/>
    </location>
</feature>
<feature type="binding site" evidence="1">
    <location>
        <begin position="632"/>
        <end position="639"/>
    </location>
    <ligand>
        <name>ATP</name>
        <dbReference type="ChEBI" id="CHEBI:30616"/>
    </ligand>
</feature>
<keyword id="KW-0067">ATP-binding</keyword>
<keyword id="KW-0227">DNA damage</keyword>
<keyword id="KW-0234">DNA repair</keyword>
<keyword id="KW-0238">DNA-binding</keyword>
<keyword id="KW-0547">Nucleotide-binding</keyword>
<keyword id="KW-1185">Reference proteome</keyword>
<organism>
    <name type="scientific">Desulforapulum autotrophicum (strain ATCC 43914 / DSM 3382 / VKM B-1955 / HRM2)</name>
    <name type="common">Desulfobacterium autotrophicum</name>
    <dbReference type="NCBI Taxonomy" id="177437"/>
    <lineage>
        <taxon>Bacteria</taxon>
        <taxon>Pseudomonadati</taxon>
        <taxon>Thermodesulfobacteriota</taxon>
        <taxon>Desulfobacteria</taxon>
        <taxon>Desulfobacterales</taxon>
        <taxon>Desulfobacteraceae</taxon>
        <taxon>Desulforapulum</taxon>
    </lineage>
</organism>
<protein>
    <recommendedName>
        <fullName evidence="1">DNA mismatch repair protein MutS</fullName>
    </recommendedName>
</protein>
<name>MUTS_DESAH</name>
<proteinExistence type="inferred from homology"/>
<accession>C0QFS1</accession>
<sequence length="895" mass="100060">MTVKKETPMMEQYLSIKKRYPDTILFYRMGDFYEMFLDDALKAAPVLEIALTSRNKTQEDPIPMCGVPHRAADVYIAKLIESGLKVAVCEQMEDPRSAQGIVKREVVRVITPGMILNEDLLDKKSNNFLAALCICQGAAGLACMDISTGMFRTTQTVAVNGKVPLSLVDEALRIDAKELLLPASFKGDPTYSQLIKAFETIQISYVGNENFKLDSARERLKEKFRTRSLEGFGCEDLTAGTAAAGAILSYVQETQLRETDHVLTLERYELNTYLIIDDRSCRNLELLKNIQTSDKKGSLISVLDCTITAMGGRLLKAWIRYPLISMDGIEARLDAVAEAKENPGIRNSLRTHLKDVYDLERLGSKISMGHANPRDLTALKISLYKLPLLFKDLNQLSASLLQGHGIEDREKVSTELFELADLINQTIREDAPLALNEGGIICDGYSPELDEILEIARNGRSWIAKTGAKEKEKTGLSSLKIKFNKVFGYFIEVSKIQSQQVPDHYIRKQTLVNAERFITDELKEVESKVLNAQERRSSLEYALFCKVRESIVQRTPSIFKIAQFLAEVDVVLALATTAEENNYTRPALNKDQVLDIEDGRHPVVEKMVVGERYIPNSIRLDNTSDQVQIITGPNMAGKSTVLRQVALISLMAQMGSFVPAARADLCIIDRIFTRVGALDNLSLGQSTFMVEMEETANIVNNAKENSLVILDEIGRGTSTFDGMSIAWAVAEYLHDLDGKGVKTLFATHYHELTRLEKLKPRVKNFNIAVKEFNDNIIFLRRLVPGGTNKSYGIQVARLAGVPDAVITKAKQILASIEQSPDQVVTQDKKQVKKQTKNNHSARSGSRQQQMDLFAGHDYDEIIKVLDQTDISTMTPIDALNLIHELKQKIRSKAMI</sequence>
<comment type="function">
    <text evidence="1">This protein is involved in the repair of mismatches in DNA. It is possible that it carries out the mismatch recognition step. This protein has a weak ATPase activity.</text>
</comment>
<comment type="similarity">
    <text evidence="1">Belongs to the DNA mismatch repair MutS family.</text>
</comment>